<keyword id="KW-0217">Developmental protein</keyword>
<keyword id="KW-0238">DNA-binding</keyword>
<keyword id="KW-0371">Homeobox</keyword>
<keyword id="KW-0539">Nucleus</keyword>
<keyword id="KW-1185">Reference proteome</keyword>
<keyword id="KW-0804">Transcription</keyword>
<keyword id="KW-0805">Transcription regulation</keyword>
<evidence type="ECO:0000255" key="1">
    <source>
        <dbReference type="PROSITE-ProRule" id="PRU00108"/>
    </source>
</evidence>
<evidence type="ECO:0000256" key="2">
    <source>
        <dbReference type="SAM" id="MobiDB-lite"/>
    </source>
</evidence>
<evidence type="ECO:0000269" key="3">
    <source>
    </source>
</evidence>
<evidence type="ECO:0000269" key="4">
    <source>
    </source>
</evidence>
<evidence type="ECO:0000269" key="5">
    <source>
    </source>
</evidence>
<evidence type="ECO:0000269" key="6">
    <source>
    </source>
</evidence>
<evidence type="ECO:0000269" key="7">
    <source>
    </source>
</evidence>
<evidence type="ECO:0000269" key="8">
    <source>
    </source>
</evidence>
<evidence type="ECO:0000303" key="9">
    <source>
    </source>
</evidence>
<evidence type="ECO:0000305" key="10"/>
<evidence type="ECO:0000312" key="11">
    <source>
        <dbReference type="MGI" id="MGI:2149034"/>
    </source>
</evidence>
<sequence length="380" mass="42638">MSKDSSLHPKYQMASNIPRETSFLVPKEPTRYLPFQMCQSPLVTPTRPLQSSHSVHERDLHQKDSQEPSRNSGSMPLSDKYYNKQSGPVATRKCRKERTVYSKEQKCLLQEHFHQCQNPDLEQRKALALLIGVTEYKIQTWFKNRRAKECRKSSQLPRRIGSGPHYRPTSSSGGEVPDFAASPDSVCQRHVNVSYPPEFRPSRNSPHQEFNSSLIDQPLEDMCFSKSHIISEHPRQKCRELSREPGHLSSDRSGCSNVLSSPSPAAGAESSCDIPSGLSLSPQLGPPSMTQNSESTFSMCQTPSVLSPLPELSPLSNSLDQMAIFSKIDQVCEIYQKNTRSKKQRKETEKNTVQNLMHGQDSCEITESPKGTVSLPSSAY</sequence>
<gene>
    <name evidence="9 11" type="primary">Obox4</name>
</gene>
<comment type="function">
    <text evidence="3 4 5 7 8">Transcription factor required for zygotic genome activation (ZGA), a critical event in early embryonic development during which the developmental control passes from maternally provided mRNAs to the expression of the zygotic genome after fertilization (PubMed:37459895). Cannot compensate for loss of other members of the Obox family, suggesting that its function differs from other Obox family members (PubMed:37459895). May regulate expression of histone genes in embryonic stem cells (PubMed:20004198). Also involved in completion of meiosis of oocytes during the meiosis-I/meiosis-II transition (PubMed:20154267, PubMed:22384421). Required to maintain the nuclear membrane of the germinal vesicle in oocytes (PubMed:26762402).</text>
</comment>
<comment type="subcellular location">
    <subcellularLocation>
        <location evidence="1 6">Nucleus</location>
    </subcellularLocation>
    <text evidence="6">Nuclear localization is dependent on its homeobox domain.</text>
</comment>
<comment type="tissue specificity">
    <text evidence="3 8">Specifically expressed in early embryos.</text>
</comment>
<comment type="developmental stage">
    <text evidence="8">Expression is low in oocytes (PubMed:37459895). Expressed zygotically with expression peaking in early-two-cell stage embryos, during minor zygotic genome activation (ZGA), and declining in late two-cell stage embryos (PubMed:37459895).</text>
</comment>
<comment type="disruption phenotype">
    <text evidence="8">No visible phenotype; mice are viable and fertile (PubMed:37459895). Female mice lacking maternally transcribed Obox1, Obox2, Obox5, Obox7 as well as zygotically expressed Obox3 and Obox4 are infertile: embryos arrest at two-four cell stage due to impaired zygotic genome activation (ZGA) (PubMed:37459895).</text>
</comment>
<comment type="similarity">
    <text evidence="10">Belongs to the paired homeobox family. Obox subfamily.</text>
</comment>
<accession>Q8VHG5</accession>
<name>OBOX4_MOUSE</name>
<feature type="chain" id="PRO_0000459213" description="Oocyte-specific homeobox protein 4">
    <location>
        <begin position="1"/>
        <end position="380"/>
    </location>
</feature>
<feature type="DNA-binding region" description="Homeobox" evidence="1">
    <location>
        <begin position="94"/>
        <end position="153"/>
    </location>
</feature>
<feature type="region of interest" description="Disordered" evidence="2">
    <location>
        <begin position="1"/>
        <end position="25"/>
    </location>
</feature>
<feature type="region of interest" description="Disordered" evidence="2">
    <location>
        <begin position="43"/>
        <end position="95"/>
    </location>
</feature>
<feature type="region of interest" description="Disordered" evidence="2">
    <location>
        <begin position="152"/>
        <end position="182"/>
    </location>
</feature>
<feature type="region of interest" description="Disordered" evidence="2">
    <location>
        <begin position="234"/>
        <end position="303"/>
    </location>
</feature>
<feature type="region of interest" description="Disordered" evidence="2">
    <location>
        <begin position="339"/>
        <end position="380"/>
    </location>
</feature>
<feature type="compositionally biased region" description="Polar residues" evidence="2">
    <location>
        <begin position="43"/>
        <end position="53"/>
    </location>
</feature>
<feature type="compositionally biased region" description="Basic and acidic residues" evidence="2">
    <location>
        <begin position="54"/>
        <end position="67"/>
    </location>
</feature>
<feature type="compositionally biased region" description="Basic and acidic residues" evidence="2">
    <location>
        <begin position="234"/>
        <end position="250"/>
    </location>
</feature>
<feature type="compositionally biased region" description="Low complexity" evidence="2">
    <location>
        <begin position="260"/>
        <end position="271"/>
    </location>
</feature>
<feature type="compositionally biased region" description="Polar residues" evidence="2">
    <location>
        <begin position="278"/>
        <end position="302"/>
    </location>
</feature>
<feature type="compositionally biased region" description="Polar residues" evidence="2">
    <location>
        <begin position="351"/>
        <end position="380"/>
    </location>
</feature>
<protein>
    <recommendedName>
        <fullName evidence="10">Oocyte-specific homeobox protein 4</fullName>
    </recommendedName>
</protein>
<proteinExistence type="evidence at transcript level"/>
<reference key="1">
    <citation type="journal article" date="2002" name="Genomics">
        <title>Obox, a family of homeobox genes preferentially expressed in germ cells.</title>
        <authorList>
            <person name="Rajkovic A."/>
            <person name="Yan C."/>
            <person name="Yan W."/>
            <person name="Klysik M."/>
            <person name="Matzuk M.M."/>
        </authorList>
    </citation>
    <scope>NUCLEOTIDE SEQUENCE [GENOMIC DNA]</scope>
    <source>
        <strain>C57BL/6J</strain>
    </source>
</reference>
<reference key="2">
    <citation type="journal article" date="2010" name="FASEB J.">
        <title>Obox4 critically regulates cAMP-dependent meiotic arrest and MI-MII transition in oocytes.</title>
        <authorList>
            <person name="Lee H.S."/>
            <person name="Kim E.Y."/>
            <person name="Kim K.H."/>
            <person name="Moon J."/>
            <person name="Park K.S."/>
            <person name="Kim K.S."/>
            <person name="Lee K.A."/>
        </authorList>
    </citation>
    <scope>FUNCTION</scope>
</reference>
<reference key="3">
    <citation type="journal article" date="2010" name="FEBS Lett.">
        <title>Obox4 regulates the expression of histone family genes and promotes differentiation of mouse embryonic stem cells.</title>
        <authorList>
            <person name="Kim H.M."/>
            <person name="Ahn H.J."/>
            <person name="Lee H.S."/>
            <person name="Lee K.A."/>
            <person name="Lee S.M."/>
            <person name="Kim H.H."/>
            <person name="Kim K.S."/>
            <person name="Park K.S."/>
        </authorList>
    </citation>
    <scope>FUNCTION</scope>
    <scope>TISSUE SPECIFICITY</scope>
</reference>
<reference key="4">
    <citation type="journal article" date="2011" name="Clin. Exp. Reprod. Med.">
        <title>Changes in gene expression associated with oocyte meiosis after Obox4 RNAi.</title>
        <authorList>
            <person name="Lee H.S."/>
            <person name="Kim E.Y."/>
            <person name="Lee K.A."/>
        </authorList>
    </citation>
    <scope>FUNCTION</scope>
</reference>
<reference key="5">
    <citation type="journal article" date="2013" name="Clin. Exp. Reprod. Med.">
        <title>Nuclear localization of Obox4 is dependent on its homeobox domain.</title>
        <authorList>
            <person name="Park G.T."/>
            <person name="Lee K.A."/>
        </authorList>
    </citation>
    <scope>SUBCELLULAR LOCATION</scope>
</reference>
<reference key="6">
    <citation type="journal article" date="2016" name="Reproduction">
        <title>Obox4-silencing-activated STAT3 and MPF/MAPK signaling accelerate nuclear membrane breakdown in mouse oocytes.</title>
        <authorList>
            <person name="Lee H.S."/>
            <person name="Kim K.H."/>
            <person name="Kim E.Y."/>
            <person name="Lee S.Y."/>
            <person name="Ko J.J."/>
            <person name="Lee K.A."/>
        </authorList>
    </citation>
    <scope>FUNCTION</scope>
</reference>
<reference key="7">
    <citation type="journal article" date="2023" name="Nature">
        <title>OBOX regulates murine zygotic genome activation and early development.</title>
        <authorList>
            <person name="Ji S."/>
            <person name="Chen F."/>
            <person name="Stein P."/>
            <person name="Wang J."/>
            <person name="Zhou Z."/>
            <person name="Wang L."/>
            <person name="Zhao Q."/>
            <person name="Lin Z."/>
            <person name="Liu B."/>
            <person name="Xu K."/>
            <person name="Lai F."/>
            <person name="Xiong Z."/>
            <person name="Hu X."/>
            <person name="Kong T."/>
            <person name="Kong F."/>
            <person name="Huang B."/>
            <person name="Wang Q."/>
            <person name="Xu Q."/>
            <person name="Fan Q."/>
            <person name="Liu L."/>
            <person name="Williams C.J."/>
            <person name="Schultz R.M."/>
            <person name="Xie W."/>
        </authorList>
    </citation>
    <scope>FUNCTION</scope>
    <scope>TISSUE SPECIFICITY</scope>
    <scope>DEVELOPMENTAL STAGE</scope>
    <scope>DISRUPTION PHENOTYPE</scope>
</reference>
<organism>
    <name type="scientific">Mus musculus</name>
    <name type="common">Mouse</name>
    <dbReference type="NCBI Taxonomy" id="10090"/>
    <lineage>
        <taxon>Eukaryota</taxon>
        <taxon>Metazoa</taxon>
        <taxon>Chordata</taxon>
        <taxon>Craniata</taxon>
        <taxon>Vertebrata</taxon>
        <taxon>Euteleostomi</taxon>
        <taxon>Mammalia</taxon>
        <taxon>Eutheria</taxon>
        <taxon>Euarchontoglires</taxon>
        <taxon>Glires</taxon>
        <taxon>Rodentia</taxon>
        <taxon>Myomorpha</taxon>
        <taxon>Muroidea</taxon>
        <taxon>Muridae</taxon>
        <taxon>Murinae</taxon>
        <taxon>Mus</taxon>
        <taxon>Mus</taxon>
    </lineage>
</organism>
<dbReference type="EMBL" id="AF461109">
    <property type="protein sequence ID" value="AAL68803.1"/>
    <property type="molecule type" value="Genomic_DNA"/>
</dbReference>
<dbReference type="SMR" id="Q8VHG5"/>
<dbReference type="MGI" id="MGI:2149034">
    <property type="gene designation" value="Obox4"/>
</dbReference>
<dbReference type="PRO" id="PR:Q8VHG5"/>
<dbReference type="Proteomes" id="UP000000589">
    <property type="component" value="Unplaced"/>
</dbReference>
<dbReference type="GO" id="GO:0005634">
    <property type="term" value="C:nucleus"/>
    <property type="evidence" value="ECO:0000314"/>
    <property type="project" value="UniProtKB"/>
</dbReference>
<dbReference type="GO" id="GO:0003677">
    <property type="term" value="F:DNA binding"/>
    <property type="evidence" value="ECO:0007669"/>
    <property type="project" value="UniProtKB-KW"/>
</dbReference>
<dbReference type="GO" id="GO:0160021">
    <property type="term" value="P:maternal-to-zygotic transition of gene expression"/>
    <property type="evidence" value="ECO:0000315"/>
    <property type="project" value="UniProtKB"/>
</dbReference>
<dbReference type="GO" id="GO:1990946">
    <property type="term" value="P:meiosis I/meiosis II transition"/>
    <property type="evidence" value="ECO:0000315"/>
    <property type="project" value="UniProtKB"/>
</dbReference>
<dbReference type="GO" id="GO:0045835">
    <property type="term" value="P:negative regulation of meiotic nuclear division"/>
    <property type="evidence" value="ECO:0000315"/>
    <property type="project" value="MGI"/>
</dbReference>
<dbReference type="GO" id="GO:1900194">
    <property type="term" value="P:negative regulation of oocyte maturation"/>
    <property type="evidence" value="ECO:0000315"/>
    <property type="project" value="MGI"/>
</dbReference>
<dbReference type="GO" id="GO:0001556">
    <property type="term" value="P:oocyte maturation"/>
    <property type="evidence" value="ECO:0000315"/>
    <property type="project" value="MGI"/>
</dbReference>
<dbReference type="GO" id="GO:0006357">
    <property type="term" value="P:regulation of transcription by RNA polymerase II"/>
    <property type="evidence" value="ECO:0000314"/>
    <property type="project" value="UniProtKB"/>
</dbReference>
<dbReference type="GO" id="GO:0048863">
    <property type="term" value="P:stem cell differentiation"/>
    <property type="evidence" value="ECO:0000314"/>
    <property type="project" value="UniProtKB"/>
</dbReference>
<dbReference type="CDD" id="cd00086">
    <property type="entry name" value="homeodomain"/>
    <property type="match status" value="1"/>
</dbReference>
<dbReference type="Gene3D" id="1.10.10.60">
    <property type="entry name" value="Homeodomain-like"/>
    <property type="match status" value="1"/>
</dbReference>
<dbReference type="InterPro" id="IPR001356">
    <property type="entry name" value="HD"/>
</dbReference>
<dbReference type="InterPro" id="IPR009057">
    <property type="entry name" value="Homeodomain-like_sf"/>
</dbReference>
<dbReference type="PANTHER" id="PTHR45793">
    <property type="entry name" value="HOMEOBOX PROTEIN"/>
    <property type="match status" value="1"/>
</dbReference>
<dbReference type="PANTHER" id="PTHR45793:SF5">
    <property type="entry name" value="HOMEOTIC PROTEIN OCELLILESS"/>
    <property type="match status" value="1"/>
</dbReference>
<dbReference type="Pfam" id="PF00046">
    <property type="entry name" value="Homeodomain"/>
    <property type="match status" value="1"/>
</dbReference>
<dbReference type="SMART" id="SM00389">
    <property type="entry name" value="HOX"/>
    <property type="match status" value="1"/>
</dbReference>
<dbReference type="SUPFAM" id="SSF46689">
    <property type="entry name" value="Homeodomain-like"/>
    <property type="match status" value="1"/>
</dbReference>
<dbReference type="PROSITE" id="PS50071">
    <property type="entry name" value="HOMEOBOX_2"/>
    <property type="match status" value="1"/>
</dbReference>